<name>AROB_SHIF8</name>
<reference key="1">
    <citation type="journal article" date="2006" name="BMC Genomics">
        <title>Complete genome sequence of Shigella flexneri 5b and comparison with Shigella flexneri 2a.</title>
        <authorList>
            <person name="Nie H."/>
            <person name="Yang F."/>
            <person name="Zhang X."/>
            <person name="Yang J."/>
            <person name="Chen L."/>
            <person name="Wang J."/>
            <person name="Xiong Z."/>
            <person name="Peng J."/>
            <person name="Sun L."/>
            <person name="Dong J."/>
            <person name="Xue Y."/>
            <person name="Xu X."/>
            <person name="Chen S."/>
            <person name="Yao Z."/>
            <person name="Shen Y."/>
            <person name="Jin Q."/>
        </authorList>
    </citation>
    <scope>NUCLEOTIDE SEQUENCE [LARGE SCALE GENOMIC DNA]</scope>
    <source>
        <strain>8401</strain>
    </source>
</reference>
<comment type="function">
    <text evidence="1">Catalyzes the conversion of 3-deoxy-D-arabino-heptulosonate 7-phosphate (DAHP) to dehydroquinate (DHQ).</text>
</comment>
<comment type="catalytic activity">
    <reaction evidence="1">
        <text>7-phospho-2-dehydro-3-deoxy-D-arabino-heptonate = 3-dehydroquinate + phosphate</text>
        <dbReference type="Rhea" id="RHEA:21968"/>
        <dbReference type="ChEBI" id="CHEBI:32364"/>
        <dbReference type="ChEBI" id="CHEBI:43474"/>
        <dbReference type="ChEBI" id="CHEBI:58394"/>
        <dbReference type="EC" id="4.2.3.4"/>
    </reaction>
</comment>
<comment type="cofactor">
    <cofactor evidence="1">
        <name>Co(2+)</name>
        <dbReference type="ChEBI" id="CHEBI:48828"/>
    </cofactor>
    <cofactor evidence="1">
        <name>Zn(2+)</name>
        <dbReference type="ChEBI" id="CHEBI:29105"/>
    </cofactor>
    <text evidence="1">Binds 1 divalent metal cation per subunit. Can use either Co(2+) or Zn(2+).</text>
</comment>
<comment type="cofactor">
    <cofactor evidence="1">
        <name>NAD(+)</name>
        <dbReference type="ChEBI" id="CHEBI:57540"/>
    </cofactor>
</comment>
<comment type="pathway">
    <text evidence="1">Metabolic intermediate biosynthesis; chorismate biosynthesis; chorismate from D-erythrose 4-phosphate and phosphoenolpyruvate: step 2/7.</text>
</comment>
<comment type="subcellular location">
    <subcellularLocation>
        <location evidence="1">Cytoplasm</location>
    </subcellularLocation>
</comment>
<comment type="similarity">
    <text evidence="1">Belongs to the sugar phosphate cyclases superfamily. Dehydroquinate synthase family.</text>
</comment>
<accession>Q0SZS9</accession>
<evidence type="ECO:0000255" key="1">
    <source>
        <dbReference type="HAMAP-Rule" id="MF_00110"/>
    </source>
</evidence>
<dbReference type="EC" id="4.2.3.4" evidence="1"/>
<dbReference type="EMBL" id="CP000266">
    <property type="protein sequence ID" value="ABF05436.1"/>
    <property type="molecule type" value="Genomic_DNA"/>
</dbReference>
<dbReference type="RefSeq" id="WP_000439873.1">
    <property type="nucleotide sequence ID" value="NC_008258.1"/>
</dbReference>
<dbReference type="SMR" id="Q0SZS9"/>
<dbReference type="KEGG" id="sfv:SFV_3394"/>
<dbReference type="HOGENOM" id="CLU_001201_0_2_6"/>
<dbReference type="UniPathway" id="UPA00053">
    <property type="reaction ID" value="UER00085"/>
</dbReference>
<dbReference type="Proteomes" id="UP000000659">
    <property type="component" value="Chromosome"/>
</dbReference>
<dbReference type="GO" id="GO:0005737">
    <property type="term" value="C:cytoplasm"/>
    <property type="evidence" value="ECO:0007669"/>
    <property type="project" value="UniProtKB-SubCell"/>
</dbReference>
<dbReference type="GO" id="GO:0003856">
    <property type="term" value="F:3-dehydroquinate synthase activity"/>
    <property type="evidence" value="ECO:0007669"/>
    <property type="project" value="UniProtKB-UniRule"/>
</dbReference>
<dbReference type="GO" id="GO:0046872">
    <property type="term" value="F:metal ion binding"/>
    <property type="evidence" value="ECO:0007669"/>
    <property type="project" value="UniProtKB-KW"/>
</dbReference>
<dbReference type="GO" id="GO:0000166">
    <property type="term" value="F:nucleotide binding"/>
    <property type="evidence" value="ECO:0007669"/>
    <property type="project" value="UniProtKB-KW"/>
</dbReference>
<dbReference type="GO" id="GO:0008652">
    <property type="term" value="P:amino acid biosynthetic process"/>
    <property type="evidence" value="ECO:0007669"/>
    <property type="project" value="UniProtKB-KW"/>
</dbReference>
<dbReference type="GO" id="GO:0009073">
    <property type="term" value="P:aromatic amino acid family biosynthetic process"/>
    <property type="evidence" value="ECO:0007669"/>
    <property type="project" value="UniProtKB-KW"/>
</dbReference>
<dbReference type="GO" id="GO:0009423">
    <property type="term" value="P:chorismate biosynthetic process"/>
    <property type="evidence" value="ECO:0007669"/>
    <property type="project" value="UniProtKB-UniRule"/>
</dbReference>
<dbReference type="CDD" id="cd08195">
    <property type="entry name" value="DHQS"/>
    <property type="match status" value="1"/>
</dbReference>
<dbReference type="FunFam" id="1.20.1090.10:FF:000002">
    <property type="entry name" value="3-dehydroquinate synthase"/>
    <property type="match status" value="1"/>
</dbReference>
<dbReference type="FunFam" id="3.40.50.1970:FF:000001">
    <property type="entry name" value="3-dehydroquinate synthase"/>
    <property type="match status" value="1"/>
</dbReference>
<dbReference type="Gene3D" id="3.40.50.1970">
    <property type="match status" value="1"/>
</dbReference>
<dbReference type="Gene3D" id="1.20.1090.10">
    <property type="entry name" value="Dehydroquinate synthase-like - alpha domain"/>
    <property type="match status" value="1"/>
</dbReference>
<dbReference type="HAMAP" id="MF_00110">
    <property type="entry name" value="DHQ_synthase"/>
    <property type="match status" value="1"/>
</dbReference>
<dbReference type="InterPro" id="IPR050071">
    <property type="entry name" value="Dehydroquinate_synthase"/>
</dbReference>
<dbReference type="InterPro" id="IPR016037">
    <property type="entry name" value="DHQ_synth_AroB"/>
</dbReference>
<dbReference type="InterPro" id="IPR030963">
    <property type="entry name" value="DHQ_synth_fam"/>
</dbReference>
<dbReference type="InterPro" id="IPR030960">
    <property type="entry name" value="DHQS/DOIS_N"/>
</dbReference>
<dbReference type="InterPro" id="IPR056179">
    <property type="entry name" value="DHQS_C"/>
</dbReference>
<dbReference type="NCBIfam" id="TIGR01357">
    <property type="entry name" value="aroB"/>
    <property type="match status" value="1"/>
</dbReference>
<dbReference type="PANTHER" id="PTHR43622">
    <property type="entry name" value="3-DEHYDROQUINATE SYNTHASE"/>
    <property type="match status" value="1"/>
</dbReference>
<dbReference type="PANTHER" id="PTHR43622:SF7">
    <property type="entry name" value="3-DEHYDROQUINATE SYNTHASE, CHLOROPLASTIC"/>
    <property type="match status" value="1"/>
</dbReference>
<dbReference type="Pfam" id="PF01761">
    <property type="entry name" value="DHQ_synthase"/>
    <property type="match status" value="1"/>
</dbReference>
<dbReference type="Pfam" id="PF24621">
    <property type="entry name" value="DHQS_C"/>
    <property type="match status" value="1"/>
</dbReference>
<dbReference type="PIRSF" id="PIRSF001455">
    <property type="entry name" value="DHQ_synth"/>
    <property type="match status" value="1"/>
</dbReference>
<dbReference type="SUPFAM" id="SSF56796">
    <property type="entry name" value="Dehydroquinate synthase-like"/>
    <property type="match status" value="1"/>
</dbReference>
<proteinExistence type="inferred from homology"/>
<feature type="chain" id="PRO_1000094622" description="3-dehydroquinate synthase">
    <location>
        <begin position="1"/>
        <end position="362"/>
    </location>
</feature>
<feature type="binding site" evidence="1">
    <location>
        <begin position="71"/>
        <end position="76"/>
    </location>
    <ligand>
        <name>NAD(+)</name>
        <dbReference type="ChEBI" id="CHEBI:57540"/>
    </ligand>
</feature>
<feature type="binding site" evidence="1">
    <location>
        <begin position="105"/>
        <end position="109"/>
    </location>
    <ligand>
        <name>NAD(+)</name>
        <dbReference type="ChEBI" id="CHEBI:57540"/>
    </ligand>
</feature>
<feature type="binding site" evidence="1">
    <location>
        <begin position="129"/>
        <end position="130"/>
    </location>
    <ligand>
        <name>NAD(+)</name>
        <dbReference type="ChEBI" id="CHEBI:57540"/>
    </ligand>
</feature>
<feature type="binding site" evidence="1">
    <location>
        <position position="142"/>
    </location>
    <ligand>
        <name>NAD(+)</name>
        <dbReference type="ChEBI" id="CHEBI:57540"/>
    </ligand>
</feature>
<feature type="binding site" evidence="1">
    <location>
        <position position="151"/>
    </location>
    <ligand>
        <name>NAD(+)</name>
        <dbReference type="ChEBI" id="CHEBI:57540"/>
    </ligand>
</feature>
<feature type="binding site" evidence="1">
    <location>
        <begin position="169"/>
        <end position="172"/>
    </location>
    <ligand>
        <name>NAD(+)</name>
        <dbReference type="ChEBI" id="CHEBI:57540"/>
    </ligand>
</feature>
<feature type="binding site" evidence="1">
    <location>
        <position position="184"/>
    </location>
    <ligand>
        <name>Zn(2+)</name>
        <dbReference type="ChEBI" id="CHEBI:29105"/>
    </ligand>
</feature>
<feature type="binding site" evidence="1">
    <location>
        <position position="247"/>
    </location>
    <ligand>
        <name>Zn(2+)</name>
        <dbReference type="ChEBI" id="CHEBI:29105"/>
    </ligand>
</feature>
<feature type="binding site" evidence="1">
    <location>
        <position position="264"/>
    </location>
    <ligand>
        <name>Zn(2+)</name>
        <dbReference type="ChEBI" id="CHEBI:29105"/>
    </ligand>
</feature>
<protein>
    <recommendedName>
        <fullName evidence="1">3-dehydroquinate synthase</fullName>
        <shortName evidence="1">DHQS</shortName>
        <ecNumber evidence="1">4.2.3.4</ecNumber>
    </recommendedName>
</protein>
<gene>
    <name evidence="1" type="primary">aroB</name>
    <name type="ordered locus">SFV_3394</name>
</gene>
<sequence>MERIVVTLGERSYPITIASGLFNEPASFLPLKSGEQVMLVTSETLAPLYLDKVRGVLEQAGVNVDSVILPDGEQYKSLAVLDTVFTALLQKPHGRDTTLVALGGGVVGDLTGFAAASYQRGVRFIQVPTTLLSQVDSSVGGKTAVNHPLGKNMIGAFYQPASVVVDLDCLKTLPPRELASGLAEVIKYGIILDGAFFNWLEENLDALLRLDGPAMAYCIRRCCELKAEVVVADERETGLRALLNLGHTFGHAIEAEMGYGNWLHGEAVAAGMVMAARTSERLGQFSSAETQRIITLLTRAGLPVNGPREMSAQAYLPHMLRDKKVLAGEIRLILPLAIGKSEVRSGVSHELVLNAIADCQSA</sequence>
<organism>
    <name type="scientific">Shigella flexneri serotype 5b (strain 8401)</name>
    <dbReference type="NCBI Taxonomy" id="373384"/>
    <lineage>
        <taxon>Bacteria</taxon>
        <taxon>Pseudomonadati</taxon>
        <taxon>Pseudomonadota</taxon>
        <taxon>Gammaproteobacteria</taxon>
        <taxon>Enterobacterales</taxon>
        <taxon>Enterobacteriaceae</taxon>
        <taxon>Shigella</taxon>
    </lineage>
</organism>
<keyword id="KW-0028">Amino-acid biosynthesis</keyword>
<keyword id="KW-0057">Aromatic amino acid biosynthesis</keyword>
<keyword id="KW-0170">Cobalt</keyword>
<keyword id="KW-0963">Cytoplasm</keyword>
<keyword id="KW-0456">Lyase</keyword>
<keyword id="KW-0479">Metal-binding</keyword>
<keyword id="KW-0520">NAD</keyword>
<keyword id="KW-0547">Nucleotide-binding</keyword>
<keyword id="KW-0862">Zinc</keyword>